<accession>B1XWR5</accession>
<comment type="function">
    <text evidence="1">Is probably a protein kinase regulator of UbiI activity which is involved in aerobic coenzyme Q (ubiquinone) biosynthesis.</text>
</comment>
<comment type="pathway">
    <text>Cofactor biosynthesis; ubiquinone biosynthesis [regulation].</text>
</comment>
<comment type="subcellular location">
    <subcellularLocation>
        <location evidence="1">Cell inner membrane</location>
        <topology evidence="1">Single-pass membrane protein</topology>
    </subcellularLocation>
</comment>
<comment type="similarity">
    <text evidence="1">Belongs to the ABC1 family. UbiB subfamily.</text>
</comment>
<name>UBIB_LEPCP</name>
<dbReference type="EC" id="2.7.-.-" evidence="1"/>
<dbReference type="EMBL" id="CP001013">
    <property type="protein sequence ID" value="ACB36264.1"/>
    <property type="molecule type" value="Genomic_DNA"/>
</dbReference>
<dbReference type="RefSeq" id="WP_012349009.1">
    <property type="nucleotide sequence ID" value="NC_010524.1"/>
</dbReference>
<dbReference type="SMR" id="B1XWR5"/>
<dbReference type="STRING" id="395495.Lcho_4010"/>
<dbReference type="KEGG" id="lch:Lcho_4010"/>
<dbReference type="eggNOG" id="COG0661">
    <property type="taxonomic scope" value="Bacteria"/>
</dbReference>
<dbReference type="HOGENOM" id="CLU_006533_0_0_4"/>
<dbReference type="OrthoDB" id="9795390at2"/>
<dbReference type="UniPathway" id="UPA00232"/>
<dbReference type="Proteomes" id="UP000001693">
    <property type="component" value="Chromosome"/>
</dbReference>
<dbReference type="GO" id="GO:0005886">
    <property type="term" value="C:plasma membrane"/>
    <property type="evidence" value="ECO:0007669"/>
    <property type="project" value="UniProtKB-SubCell"/>
</dbReference>
<dbReference type="GO" id="GO:0005524">
    <property type="term" value="F:ATP binding"/>
    <property type="evidence" value="ECO:0007669"/>
    <property type="project" value="UniProtKB-KW"/>
</dbReference>
<dbReference type="GO" id="GO:0004672">
    <property type="term" value="F:protein kinase activity"/>
    <property type="evidence" value="ECO:0007669"/>
    <property type="project" value="UniProtKB-UniRule"/>
</dbReference>
<dbReference type="GO" id="GO:0010795">
    <property type="term" value="P:regulation of ubiquinone biosynthetic process"/>
    <property type="evidence" value="ECO:0007669"/>
    <property type="project" value="UniProtKB-UniRule"/>
</dbReference>
<dbReference type="GO" id="GO:0006744">
    <property type="term" value="P:ubiquinone biosynthetic process"/>
    <property type="evidence" value="ECO:0007669"/>
    <property type="project" value="UniProtKB-UniPathway"/>
</dbReference>
<dbReference type="CDD" id="cd13972">
    <property type="entry name" value="UbiB"/>
    <property type="match status" value="1"/>
</dbReference>
<dbReference type="HAMAP" id="MF_00414">
    <property type="entry name" value="UbiB"/>
    <property type="match status" value="1"/>
</dbReference>
<dbReference type="InterPro" id="IPR004147">
    <property type="entry name" value="ABC1_dom"/>
</dbReference>
<dbReference type="InterPro" id="IPR011009">
    <property type="entry name" value="Kinase-like_dom_sf"/>
</dbReference>
<dbReference type="InterPro" id="IPR010232">
    <property type="entry name" value="UbiB"/>
</dbReference>
<dbReference type="InterPro" id="IPR045308">
    <property type="entry name" value="UbiB_bact"/>
</dbReference>
<dbReference type="InterPro" id="IPR050154">
    <property type="entry name" value="UbiB_kinase"/>
</dbReference>
<dbReference type="NCBIfam" id="NF003404">
    <property type="entry name" value="PRK04750.1"/>
    <property type="match status" value="1"/>
</dbReference>
<dbReference type="NCBIfam" id="TIGR01982">
    <property type="entry name" value="UbiB"/>
    <property type="match status" value="1"/>
</dbReference>
<dbReference type="PANTHER" id="PTHR10566">
    <property type="entry name" value="CHAPERONE-ACTIVITY OF BC1 COMPLEX CABC1 -RELATED"/>
    <property type="match status" value="1"/>
</dbReference>
<dbReference type="PANTHER" id="PTHR10566:SF113">
    <property type="entry name" value="PROTEIN ACTIVITY OF BC1 COMPLEX KINASE 7, CHLOROPLASTIC"/>
    <property type="match status" value="1"/>
</dbReference>
<dbReference type="Pfam" id="PF03109">
    <property type="entry name" value="ABC1"/>
    <property type="match status" value="1"/>
</dbReference>
<dbReference type="SUPFAM" id="SSF56112">
    <property type="entry name" value="Protein kinase-like (PK-like)"/>
    <property type="match status" value="1"/>
</dbReference>
<feature type="chain" id="PRO_1000123913" description="Probable protein kinase UbiB">
    <location>
        <begin position="1"/>
        <end position="522"/>
    </location>
</feature>
<feature type="transmembrane region" description="Helical" evidence="1">
    <location>
        <begin position="494"/>
        <end position="514"/>
    </location>
</feature>
<feature type="domain" description="Protein kinase" evidence="1">
    <location>
        <begin position="119"/>
        <end position="496"/>
    </location>
</feature>
<feature type="active site" description="Proton acceptor" evidence="1">
    <location>
        <position position="282"/>
    </location>
</feature>
<feature type="binding site" evidence="1">
    <location>
        <begin position="125"/>
        <end position="133"/>
    </location>
    <ligand>
        <name>ATP</name>
        <dbReference type="ChEBI" id="CHEBI:30616"/>
    </ligand>
</feature>
<feature type="binding site" evidence="1">
    <location>
        <position position="147"/>
    </location>
    <ligand>
        <name>ATP</name>
        <dbReference type="ChEBI" id="CHEBI:30616"/>
    </ligand>
</feature>
<evidence type="ECO:0000255" key="1">
    <source>
        <dbReference type="HAMAP-Rule" id="MF_00414"/>
    </source>
</evidence>
<sequence length="522" mass="59164">MKNWPRLAFIAWVLLRQGMDQLVLSHMPHASLRLLARLMSIGRTHHEPRGVRLRMALERLGPIFVKFGQVLSTRRDLIPHDIANELAKLQDRVPPFPSDVSRAAVVQSLGRPIEEVFASFDADPVASASIAQVHFGVLHDGREVAVKVLRPNVLNIIEADLALLRVAAAWLERLSPDGRRLRPREVVAEFDNYLHDELDLGREAANAAQLRRNMGGLDLIMLPEMIWDLSSAEVLVMERMHGVPISQIETLRAAGIDIPKLARDGVTIFFTQVFRDGFFHADMHPGNIMVSTAPATFGRYIALDFGIVGTLDSRDKEYLAQNFLAFFRRDYRRVAELHIESGWVPASTRVDELEGAVRAVCEPHFDRPLKDISLGQVLLRLFQTSRRFNVEIQPQLVLLQKTLLNVEGLGRQLDPELDLWQTAKPFLERWMNEQVGWRALLGSIKDEAPRYAKLLPELPRLLHDALQAHARPQRPSDELLLALLHEQRRTNRLLLTVFYLIGGFVAGGLFAHWILPGLLHLL</sequence>
<gene>
    <name evidence="1" type="primary">ubiB</name>
    <name type="ordered locus">Lcho_4010</name>
</gene>
<organism>
    <name type="scientific">Leptothrix cholodnii (strain ATCC 51168 / LMG 8142 / SP-6)</name>
    <name type="common">Leptothrix discophora (strain SP-6)</name>
    <dbReference type="NCBI Taxonomy" id="395495"/>
    <lineage>
        <taxon>Bacteria</taxon>
        <taxon>Pseudomonadati</taxon>
        <taxon>Pseudomonadota</taxon>
        <taxon>Betaproteobacteria</taxon>
        <taxon>Burkholderiales</taxon>
        <taxon>Sphaerotilaceae</taxon>
        <taxon>Leptothrix</taxon>
    </lineage>
</organism>
<proteinExistence type="inferred from homology"/>
<protein>
    <recommendedName>
        <fullName evidence="1">Probable protein kinase UbiB</fullName>
        <ecNumber evidence="1">2.7.-.-</ecNumber>
    </recommendedName>
    <alternativeName>
        <fullName evidence="1">Ubiquinone biosynthesis protein UbiB</fullName>
    </alternativeName>
</protein>
<keyword id="KW-0067">ATP-binding</keyword>
<keyword id="KW-0997">Cell inner membrane</keyword>
<keyword id="KW-1003">Cell membrane</keyword>
<keyword id="KW-0418">Kinase</keyword>
<keyword id="KW-0472">Membrane</keyword>
<keyword id="KW-0547">Nucleotide-binding</keyword>
<keyword id="KW-1185">Reference proteome</keyword>
<keyword id="KW-0808">Transferase</keyword>
<keyword id="KW-0812">Transmembrane</keyword>
<keyword id="KW-1133">Transmembrane helix</keyword>
<keyword id="KW-0831">Ubiquinone biosynthesis</keyword>
<reference key="1">
    <citation type="submission" date="2008-03" db="EMBL/GenBank/DDBJ databases">
        <title>Complete sequence of Leptothrix cholodnii SP-6.</title>
        <authorList>
            <consortium name="US DOE Joint Genome Institute"/>
            <person name="Copeland A."/>
            <person name="Lucas S."/>
            <person name="Lapidus A."/>
            <person name="Glavina del Rio T."/>
            <person name="Dalin E."/>
            <person name="Tice H."/>
            <person name="Bruce D."/>
            <person name="Goodwin L."/>
            <person name="Pitluck S."/>
            <person name="Chertkov O."/>
            <person name="Brettin T."/>
            <person name="Detter J.C."/>
            <person name="Han C."/>
            <person name="Kuske C.R."/>
            <person name="Schmutz J."/>
            <person name="Larimer F."/>
            <person name="Land M."/>
            <person name="Hauser L."/>
            <person name="Kyrpides N."/>
            <person name="Lykidis A."/>
            <person name="Emerson D."/>
            <person name="Richardson P."/>
        </authorList>
    </citation>
    <scope>NUCLEOTIDE SEQUENCE [LARGE SCALE GENOMIC DNA]</scope>
    <source>
        <strain>ATCC 51168 / LMG 8142 / SP-6</strain>
    </source>
</reference>